<dbReference type="EC" id="2.7.1.71" evidence="1"/>
<dbReference type="EMBL" id="CP000388">
    <property type="protein sequence ID" value="ABG39195.1"/>
    <property type="molecule type" value="Genomic_DNA"/>
</dbReference>
<dbReference type="RefSeq" id="WP_006990745.1">
    <property type="nucleotide sequence ID" value="NC_008228.1"/>
</dbReference>
<dbReference type="SMR" id="Q15Y43"/>
<dbReference type="STRING" id="342610.Patl_0666"/>
<dbReference type="KEGG" id="pat:Patl_0666"/>
<dbReference type="eggNOG" id="COG0703">
    <property type="taxonomic scope" value="Bacteria"/>
</dbReference>
<dbReference type="HOGENOM" id="CLU_057607_2_2_6"/>
<dbReference type="OrthoDB" id="9800332at2"/>
<dbReference type="UniPathway" id="UPA00053">
    <property type="reaction ID" value="UER00088"/>
</dbReference>
<dbReference type="Proteomes" id="UP000001981">
    <property type="component" value="Chromosome"/>
</dbReference>
<dbReference type="GO" id="GO:0005829">
    <property type="term" value="C:cytosol"/>
    <property type="evidence" value="ECO:0007669"/>
    <property type="project" value="TreeGrafter"/>
</dbReference>
<dbReference type="GO" id="GO:0005524">
    <property type="term" value="F:ATP binding"/>
    <property type="evidence" value="ECO:0007669"/>
    <property type="project" value="UniProtKB-UniRule"/>
</dbReference>
<dbReference type="GO" id="GO:0000287">
    <property type="term" value="F:magnesium ion binding"/>
    <property type="evidence" value="ECO:0007669"/>
    <property type="project" value="UniProtKB-UniRule"/>
</dbReference>
<dbReference type="GO" id="GO:0004765">
    <property type="term" value="F:shikimate kinase activity"/>
    <property type="evidence" value="ECO:0007669"/>
    <property type="project" value="UniProtKB-UniRule"/>
</dbReference>
<dbReference type="GO" id="GO:0008652">
    <property type="term" value="P:amino acid biosynthetic process"/>
    <property type="evidence" value="ECO:0007669"/>
    <property type="project" value="UniProtKB-KW"/>
</dbReference>
<dbReference type="GO" id="GO:0009073">
    <property type="term" value="P:aromatic amino acid family biosynthetic process"/>
    <property type="evidence" value="ECO:0007669"/>
    <property type="project" value="UniProtKB-KW"/>
</dbReference>
<dbReference type="GO" id="GO:0009423">
    <property type="term" value="P:chorismate biosynthetic process"/>
    <property type="evidence" value="ECO:0007669"/>
    <property type="project" value="UniProtKB-UniRule"/>
</dbReference>
<dbReference type="CDD" id="cd00464">
    <property type="entry name" value="SK"/>
    <property type="match status" value="1"/>
</dbReference>
<dbReference type="FunFam" id="3.40.50.300:FF:000099">
    <property type="entry name" value="Shikimate kinase 1"/>
    <property type="match status" value="1"/>
</dbReference>
<dbReference type="Gene3D" id="3.40.50.300">
    <property type="entry name" value="P-loop containing nucleotide triphosphate hydrolases"/>
    <property type="match status" value="1"/>
</dbReference>
<dbReference type="HAMAP" id="MF_00109">
    <property type="entry name" value="Shikimate_kinase"/>
    <property type="match status" value="1"/>
</dbReference>
<dbReference type="InterPro" id="IPR027417">
    <property type="entry name" value="P-loop_NTPase"/>
</dbReference>
<dbReference type="InterPro" id="IPR031322">
    <property type="entry name" value="Shikimate/glucono_kinase"/>
</dbReference>
<dbReference type="InterPro" id="IPR000623">
    <property type="entry name" value="Shikimate_kinase/TSH1"/>
</dbReference>
<dbReference type="InterPro" id="IPR023000">
    <property type="entry name" value="Shikimate_kinase_CS"/>
</dbReference>
<dbReference type="NCBIfam" id="NF003456">
    <property type="entry name" value="PRK05057.1"/>
    <property type="match status" value="1"/>
</dbReference>
<dbReference type="PANTHER" id="PTHR21087">
    <property type="entry name" value="SHIKIMATE KINASE"/>
    <property type="match status" value="1"/>
</dbReference>
<dbReference type="PANTHER" id="PTHR21087:SF16">
    <property type="entry name" value="SHIKIMATE KINASE 1, CHLOROPLASTIC"/>
    <property type="match status" value="1"/>
</dbReference>
<dbReference type="Pfam" id="PF01202">
    <property type="entry name" value="SKI"/>
    <property type="match status" value="1"/>
</dbReference>
<dbReference type="PRINTS" id="PR01100">
    <property type="entry name" value="SHIKIMTKNASE"/>
</dbReference>
<dbReference type="SUPFAM" id="SSF52540">
    <property type="entry name" value="P-loop containing nucleoside triphosphate hydrolases"/>
    <property type="match status" value="1"/>
</dbReference>
<dbReference type="PROSITE" id="PS01128">
    <property type="entry name" value="SHIKIMATE_KINASE"/>
    <property type="match status" value="1"/>
</dbReference>
<sequence length="171" mass="19286">MAEKRNIFLIGPMGAGKSTIGRHLADELHLEFYDSDQEIEKRTGADIAWIFDLEGEEGFRAREETVINDLTDKQGIVLATGGGSVVSKAVRNRLSARGIVVYLQTTIDKQVARTQRDKRRPLLQKDDPETVLRRLAEERNPMYEDAADYIVDTDEQSARAVANQIIEKINQ</sequence>
<reference key="1">
    <citation type="submission" date="2006-06" db="EMBL/GenBank/DDBJ databases">
        <title>Complete sequence of Pseudoalteromonas atlantica T6c.</title>
        <authorList>
            <consortium name="US DOE Joint Genome Institute"/>
            <person name="Copeland A."/>
            <person name="Lucas S."/>
            <person name="Lapidus A."/>
            <person name="Barry K."/>
            <person name="Detter J.C."/>
            <person name="Glavina del Rio T."/>
            <person name="Hammon N."/>
            <person name="Israni S."/>
            <person name="Dalin E."/>
            <person name="Tice H."/>
            <person name="Pitluck S."/>
            <person name="Saunders E."/>
            <person name="Brettin T."/>
            <person name="Bruce D."/>
            <person name="Han C."/>
            <person name="Tapia R."/>
            <person name="Gilna P."/>
            <person name="Schmutz J."/>
            <person name="Larimer F."/>
            <person name="Land M."/>
            <person name="Hauser L."/>
            <person name="Kyrpides N."/>
            <person name="Kim E."/>
            <person name="Karls A.C."/>
            <person name="Bartlett D."/>
            <person name="Higgins B.P."/>
            <person name="Richardson P."/>
        </authorList>
    </citation>
    <scope>NUCLEOTIDE SEQUENCE [LARGE SCALE GENOMIC DNA]</scope>
    <source>
        <strain>T6c / ATCC BAA-1087</strain>
    </source>
</reference>
<accession>Q15Y43</accession>
<name>AROK_PSEA6</name>
<proteinExistence type="inferred from homology"/>
<organism>
    <name type="scientific">Pseudoalteromonas atlantica (strain T6c / ATCC BAA-1087)</name>
    <dbReference type="NCBI Taxonomy" id="3042615"/>
    <lineage>
        <taxon>Bacteria</taxon>
        <taxon>Pseudomonadati</taxon>
        <taxon>Pseudomonadota</taxon>
        <taxon>Gammaproteobacteria</taxon>
        <taxon>Alteromonadales</taxon>
        <taxon>Alteromonadaceae</taxon>
        <taxon>Paraglaciecola</taxon>
    </lineage>
</organism>
<feature type="chain" id="PRO_1000022984" description="Shikimate kinase">
    <location>
        <begin position="1"/>
        <end position="171"/>
    </location>
</feature>
<feature type="binding site" evidence="1">
    <location>
        <begin position="14"/>
        <end position="19"/>
    </location>
    <ligand>
        <name>ATP</name>
        <dbReference type="ChEBI" id="CHEBI:30616"/>
    </ligand>
</feature>
<feature type="binding site" evidence="1">
    <location>
        <position position="18"/>
    </location>
    <ligand>
        <name>Mg(2+)</name>
        <dbReference type="ChEBI" id="CHEBI:18420"/>
    </ligand>
</feature>
<feature type="binding site" evidence="1">
    <location>
        <position position="36"/>
    </location>
    <ligand>
        <name>substrate</name>
    </ligand>
</feature>
<feature type="binding site" evidence="1">
    <location>
        <position position="60"/>
    </location>
    <ligand>
        <name>substrate</name>
    </ligand>
</feature>
<feature type="binding site" evidence="1">
    <location>
        <position position="82"/>
    </location>
    <ligand>
        <name>substrate</name>
    </ligand>
</feature>
<feature type="binding site" evidence="1">
    <location>
        <position position="120"/>
    </location>
    <ligand>
        <name>ATP</name>
        <dbReference type="ChEBI" id="CHEBI:30616"/>
    </ligand>
</feature>
<feature type="binding site" evidence="1">
    <location>
        <position position="139"/>
    </location>
    <ligand>
        <name>substrate</name>
    </ligand>
</feature>
<feature type="binding site" evidence="1">
    <location>
        <position position="156"/>
    </location>
    <ligand>
        <name>ATP</name>
        <dbReference type="ChEBI" id="CHEBI:30616"/>
    </ligand>
</feature>
<comment type="function">
    <text evidence="1">Catalyzes the specific phosphorylation of the 3-hydroxyl group of shikimic acid using ATP as a cosubstrate.</text>
</comment>
<comment type="catalytic activity">
    <reaction evidence="1">
        <text>shikimate + ATP = 3-phosphoshikimate + ADP + H(+)</text>
        <dbReference type="Rhea" id="RHEA:13121"/>
        <dbReference type="ChEBI" id="CHEBI:15378"/>
        <dbReference type="ChEBI" id="CHEBI:30616"/>
        <dbReference type="ChEBI" id="CHEBI:36208"/>
        <dbReference type="ChEBI" id="CHEBI:145989"/>
        <dbReference type="ChEBI" id="CHEBI:456216"/>
        <dbReference type="EC" id="2.7.1.71"/>
    </reaction>
</comment>
<comment type="cofactor">
    <cofactor evidence="1">
        <name>Mg(2+)</name>
        <dbReference type="ChEBI" id="CHEBI:18420"/>
    </cofactor>
    <text evidence="1">Binds 1 Mg(2+) ion per subunit.</text>
</comment>
<comment type="pathway">
    <text evidence="1">Metabolic intermediate biosynthesis; chorismate biosynthesis; chorismate from D-erythrose 4-phosphate and phosphoenolpyruvate: step 5/7.</text>
</comment>
<comment type="subunit">
    <text evidence="1">Monomer.</text>
</comment>
<comment type="subcellular location">
    <subcellularLocation>
        <location evidence="1">Cytoplasm</location>
    </subcellularLocation>
</comment>
<comment type="similarity">
    <text evidence="1">Belongs to the shikimate kinase family.</text>
</comment>
<keyword id="KW-0028">Amino-acid biosynthesis</keyword>
<keyword id="KW-0057">Aromatic amino acid biosynthesis</keyword>
<keyword id="KW-0067">ATP-binding</keyword>
<keyword id="KW-0963">Cytoplasm</keyword>
<keyword id="KW-0418">Kinase</keyword>
<keyword id="KW-0460">Magnesium</keyword>
<keyword id="KW-0479">Metal-binding</keyword>
<keyword id="KW-0547">Nucleotide-binding</keyword>
<keyword id="KW-0808">Transferase</keyword>
<protein>
    <recommendedName>
        <fullName evidence="1">Shikimate kinase</fullName>
        <shortName evidence="1">SK</shortName>
        <ecNumber evidence="1">2.7.1.71</ecNumber>
    </recommendedName>
</protein>
<evidence type="ECO:0000255" key="1">
    <source>
        <dbReference type="HAMAP-Rule" id="MF_00109"/>
    </source>
</evidence>
<gene>
    <name evidence="1" type="primary">aroK</name>
    <name type="ordered locus">Patl_0666</name>
</gene>